<sequence>MNSIKNGFFLCMIFLLWCHVDSGVSIDPFSHSHSLNTECVMKPPRSSETKGLLQFSRSLEDDSDEEWKIDGNGFIREMAQRIQLHQGNIYSFSAWVKLREGNDKKVGVVFRTENGRLVHGGEVRANQECWTLLKGGIVPDFSGPVDIFFESENRGAKISAHNVLLKQFSKEEWKLKQDQLIEKIRKSKVRFEVTYENKTAVKGVVISLKQTKSSFLLGCGMNFRILQSQGYRKWFASRFKITSFTNEMKWYATEKARGQENYTVADSMLKFAEDNGILVRGHTVLWDNPKMQPSWVKNIKDPNDVMNVTLNRINSVMKRYKGKLTGWDVVNENLHWDYFEKMLGANASTSFYNLAFKIDPDVRLFVNEYNTIENTKEFTATPIKVKKMMEEILAYPGNKNMKGAIGAQGHFGPTQPNLAYIRSALDTLGSLGLPIWLTEVDMPKCPNQAQYVEDILREAYSHPAVKGIIIFGGPEVSGFDKLTLADKDFNNTQTGDVIDKLLKEWQQKSSEIQTNFTADSDNEEEEVSLLHGHYNVNVSHPWIANLSTSFSLEVTKEMDQDQVIRVVISA</sequence>
<gene>
    <name evidence="6" type="ordered locus">At4g33820</name>
    <name evidence="7" type="ORF">F17I5.10</name>
</gene>
<reference key="1">
    <citation type="journal article" date="1999" name="Nature">
        <title>Sequence and analysis of chromosome 4 of the plant Arabidopsis thaliana.</title>
        <authorList>
            <person name="Mayer K.F.X."/>
            <person name="Schueller C."/>
            <person name="Wambutt R."/>
            <person name="Murphy G."/>
            <person name="Volckaert G."/>
            <person name="Pohl T."/>
            <person name="Duesterhoeft A."/>
            <person name="Stiekema W."/>
            <person name="Entian K.-D."/>
            <person name="Terryn N."/>
            <person name="Harris B."/>
            <person name="Ansorge W."/>
            <person name="Brandt P."/>
            <person name="Grivell L.A."/>
            <person name="Rieger M."/>
            <person name="Weichselgartner M."/>
            <person name="de Simone V."/>
            <person name="Obermaier B."/>
            <person name="Mache R."/>
            <person name="Mueller M."/>
            <person name="Kreis M."/>
            <person name="Delseny M."/>
            <person name="Puigdomenech P."/>
            <person name="Watson M."/>
            <person name="Schmidtheini T."/>
            <person name="Reichert B."/>
            <person name="Portetelle D."/>
            <person name="Perez-Alonso M."/>
            <person name="Boutry M."/>
            <person name="Bancroft I."/>
            <person name="Vos P."/>
            <person name="Hoheisel J."/>
            <person name="Zimmermann W."/>
            <person name="Wedler H."/>
            <person name="Ridley P."/>
            <person name="Langham S.-A."/>
            <person name="McCullagh B."/>
            <person name="Bilham L."/>
            <person name="Robben J."/>
            <person name="van der Schueren J."/>
            <person name="Grymonprez B."/>
            <person name="Chuang Y.-J."/>
            <person name="Vandenbussche F."/>
            <person name="Braeken M."/>
            <person name="Weltjens I."/>
            <person name="Voet M."/>
            <person name="Bastiaens I."/>
            <person name="Aert R."/>
            <person name="Defoor E."/>
            <person name="Weitzenegger T."/>
            <person name="Bothe G."/>
            <person name="Ramsperger U."/>
            <person name="Hilbert H."/>
            <person name="Braun M."/>
            <person name="Holzer E."/>
            <person name="Brandt A."/>
            <person name="Peters S."/>
            <person name="van Staveren M."/>
            <person name="Dirkse W."/>
            <person name="Mooijman P."/>
            <person name="Klein Lankhorst R."/>
            <person name="Rose M."/>
            <person name="Hauf J."/>
            <person name="Koetter P."/>
            <person name="Berneiser S."/>
            <person name="Hempel S."/>
            <person name="Feldpausch M."/>
            <person name="Lamberth S."/>
            <person name="Van den Daele H."/>
            <person name="De Keyser A."/>
            <person name="Buysshaert C."/>
            <person name="Gielen J."/>
            <person name="Villarroel R."/>
            <person name="De Clercq R."/>
            <person name="van Montagu M."/>
            <person name="Rogers J."/>
            <person name="Cronin A."/>
            <person name="Quail M.A."/>
            <person name="Bray-Allen S."/>
            <person name="Clark L."/>
            <person name="Doggett J."/>
            <person name="Hall S."/>
            <person name="Kay M."/>
            <person name="Lennard N."/>
            <person name="McLay K."/>
            <person name="Mayes R."/>
            <person name="Pettett A."/>
            <person name="Rajandream M.A."/>
            <person name="Lyne M."/>
            <person name="Benes V."/>
            <person name="Rechmann S."/>
            <person name="Borkova D."/>
            <person name="Bloecker H."/>
            <person name="Scharfe M."/>
            <person name="Grimm M."/>
            <person name="Loehnert T.-H."/>
            <person name="Dose S."/>
            <person name="de Haan M."/>
            <person name="Maarse A.C."/>
            <person name="Schaefer M."/>
            <person name="Mueller-Auer S."/>
            <person name="Gabel C."/>
            <person name="Fuchs M."/>
            <person name="Fartmann B."/>
            <person name="Granderath K."/>
            <person name="Dauner D."/>
            <person name="Herzl A."/>
            <person name="Neumann S."/>
            <person name="Argiriou A."/>
            <person name="Vitale D."/>
            <person name="Liguori R."/>
            <person name="Piravandi E."/>
            <person name="Massenet O."/>
            <person name="Quigley F."/>
            <person name="Clabauld G."/>
            <person name="Muendlein A."/>
            <person name="Felber R."/>
            <person name="Schnabl S."/>
            <person name="Hiller R."/>
            <person name="Schmidt W."/>
            <person name="Lecharny A."/>
            <person name="Aubourg S."/>
            <person name="Chefdor F."/>
            <person name="Cooke R."/>
            <person name="Berger C."/>
            <person name="Monfort A."/>
            <person name="Casacuberta E."/>
            <person name="Gibbons T."/>
            <person name="Weber N."/>
            <person name="Vandenbol M."/>
            <person name="Bargues M."/>
            <person name="Terol J."/>
            <person name="Torres A."/>
            <person name="Perez-Perez A."/>
            <person name="Purnelle B."/>
            <person name="Bent E."/>
            <person name="Johnson S."/>
            <person name="Tacon D."/>
            <person name="Jesse T."/>
            <person name="Heijnen L."/>
            <person name="Schwarz S."/>
            <person name="Scholler P."/>
            <person name="Heber S."/>
            <person name="Francs P."/>
            <person name="Bielke C."/>
            <person name="Frishman D."/>
            <person name="Haase D."/>
            <person name="Lemcke K."/>
            <person name="Mewes H.-W."/>
            <person name="Stocker S."/>
            <person name="Zaccaria P."/>
            <person name="Bevan M."/>
            <person name="Wilson R.K."/>
            <person name="de la Bastide M."/>
            <person name="Habermann K."/>
            <person name="Parnell L."/>
            <person name="Dedhia N."/>
            <person name="Gnoj L."/>
            <person name="Schutz K."/>
            <person name="Huang E."/>
            <person name="Spiegel L."/>
            <person name="Sekhon M."/>
            <person name="Murray J."/>
            <person name="Sheet P."/>
            <person name="Cordes M."/>
            <person name="Abu-Threideh J."/>
            <person name="Stoneking T."/>
            <person name="Kalicki J."/>
            <person name="Graves T."/>
            <person name="Harmon G."/>
            <person name="Edwards J."/>
            <person name="Latreille P."/>
            <person name="Courtney L."/>
            <person name="Cloud J."/>
            <person name="Abbott A."/>
            <person name="Scott K."/>
            <person name="Johnson D."/>
            <person name="Minx P."/>
            <person name="Bentley D."/>
            <person name="Fulton B."/>
            <person name="Miller N."/>
            <person name="Greco T."/>
            <person name="Kemp K."/>
            <person name="Kramer J."/>
            <person name="Fulton L."/>
            <person name="Mardis E."/>
            <person name="Dante M."/>
            <person name="Pepin K."/>
            <person name="Hillier L.W."/>
            <person name="Nelson J."/>
            <person name="Spieth J."/>
            <person name="Ryan E."/>
            <person name="Andrews S."/>
            <person name="Geisel C."/>
            <person name="Layman D."/>
            <person name="Du H."/>
            <person name="Ali J."/>
            <person name="Berghoff A."/>
            <person name="Jones K."/>
            <person name="Drone K."/>
            <person name="Cotton M."/>
            <person name="Joshu C."/>
            <person name="Antonoiu B."/>
            <person name="Zidanic M."/>
            <person name="Strong C."/>
            <person name="Sun H."/>
            <person name="Lamar B."/>
            <person name="Yordan C."/>
            <person name="Ma P."/>
            <person name="Zhong J."/>
            <person name="Preston R."/>
            <person name="Vil D."/>
            <person name="Shekher M."/>
            <person name="Matero A."/>
            <person name="Shah R."/>
            <person name="Swaby I.K."/>
            <person name="O'Shaughnessy A."/>
            <person name="Rodriguez M."/>
            <person name="Hoffman J."/>
            <person name="Till S."/>
            <person name="Granat S."/>
            <person name="Shohdy N."/>
            <person name="Hasegawa A."/>
            <person name="Hameed A."/>
            <person name="Lodhi M."/>
            <person name="Johnson A."/>
            <person name="Chen E."/>
            <person name="Marra M.A."/>
            <person name="Martienssen R."/>
            <person name="McCombie W.R."/>
        </authorList>
    </citation>
    <scope>NUCLEOTIDE SEQUENCE [LARGE SCALE GENOMIC DNA]</scope>
    <source>
        <strain>cv. Columbia</strain>
    </source>
</reference>
<reference key="2">
    <citation type="journal article" date="2017" name="Plant J.">
        <title>Araport11: a complete reannotation of the Arabidopsis thaliana reference genome.</title>
        <authorList>
            <person name="Cheng C.Y."/>
            <person name="Krishnakumar V."/>
            <person name="Chan A.P."/>
            <person name="Thibaud-Nissen F."/>
            <person name="Schobel S."/>
            <person name="Town C.D."/>
        </authorList>
    </citation>
    <scope>GENOME REANNOTATION</scope>
    <source>
        <strain>cv. Columbia</strain>
    </source>
</reference>
<reference key="3">
    <citation type="journal article" date="2003" name="Science">
        <title>Empirical analysis of transcriptional activity in the Arabidopsis genome.</title>
        <authorList>
            <person name="Yamada K."/>
            <person name="Lim J."/>
            <person name="Dale J.M."/>
            <person name="Chen H."/>
            <person name="Shinn P."/>
            <person name="Palm C.J."/>
            <person name="Southwick A.M."/>
            <person name="Wu H.C."/>
            <person name="Kim C.J."/>
            <person name="Nguyen M."/>
            <person name="Pham P.K."/>
            <person name="Cheuk R.F."/>
            <person name="Karlin-Newmann G."/>
            <person name="Liu S.X."/>
            <person name="Lam B."/>
            <person name="Sakano H."/>
            <person name="Wu T."/>
            <person name="Yu G."/>
            <person name="Miranda M."/>
            <person name="Quach H.L."/>
            <person name="Tripp M."/>
            <person name="Chang C.H."/>
            <person name="Lee J.M."/>
            <person name="Toriumi M.J."/>
            <person name="Chan M.M."/>
            <person name="Tang C.C."/>
            <person name="Onodera C.S."/>
            <person name="Deng J.M."/>
            <person name="Akiyama K."/>
            <person name="Ansari Y."/>
            <person name="Arakawa T."/>
            <person name="Banh J."/>
            <person name="Banno F."/>
            <person name="Bowser L."/>
            <person name="Brooks S.Y."/>
            <person name="Carninci P."/>
            <person name="Chao Q."/>
            <person name="Choy N."/>
            <person name="Enju A."/>
            <person name="Goldsmith A.D."/>
            <person name="Gurjal M."/>
            <person name="Hansen N.F."/>
            <person name="Hayashizaki Y."/>
            <person name="Johnson-Hopson C."/>
            <person name="Hsuan V.W."/>
            <person name="Iida K."/>
            <person name="Karnes M."/>
            <person name="Khan S."/>
            <person name="Koesema E."/>
            <person name="Ishida J."/>
            <person name="Jiang P.X."/>
            <person name="Jones T."/>
            <person name="Kawai J."/>
            <person name="Kamiya A."/>
            <person name="Meyers C."/>
            <person name="Nakajima M."/>
            <person name="Narusaka M."/>
            <person name="Seki M."/>
            <person name="Sakurai T."/>
            <person name="Satou M."/>
            <person name="Tamse R."/>
            <person name="Vaysberg M."/>
            <person name="Wallender E.K."/>
            <person name="Wong C."/>
            <person name="Yamamura Y."/>
            <person name="Yuan S."/>
            <person name="Shinozaki K."/>
            <person name="Davis R.W."/>
            <person name="Theologis A."/>
            <person name="Ecker J.R."/>
        </authorList>
    </citation>
    <scope>NUCLEOTIDE SEQUENCE [LARGE SCALE MRNA]</scope>
    <source>
        <strain>cv. Columbia</strain>
    </source>
</reference>
<reference key="4">
    <citation type="journal article" date="2002" name="Plant Cell Physiol.">
        <title>A xylanase, AtXyn1, is predominantly expressed in vascular bundles, and four putative xylanase genes were identified in the Arabidopsis thaliana genome.</title>
        <authorList>
            <person name="Suzuki M."/>
            <person name="Kato A."/>
            <person name="Nagata N."/>
            <person name="Komeda Y."/>
        </authorList>
    </citation>
    <scope>GENE FAMILY</scope>
    <source>
        <strain>cv. Columbia</strain>
    </source>
</reference>
<feature type="signal peptide" evidence="2">
    <location>
        <begin position="1"/>
        <end position="23"/>
    </location>
</feature>
<feature type="chain" id="PRO_5014311984" description="Endo-1,4-beta-xylanase 5-like">
    <location>
        <begin position="24"/>
        <end position="570"/>
    </location>
</feature>
<feature type="domain" description="GH10" evidence="4">
    <location>
        <begin position="202"/>
        <end position="501"/>
    </location>
</feature>
<feature type="active site" description="Proton donor" evidence="4">
    <location>
        <position position="332"/>
    </location>
</feature>
<feature type="active site" description="Nucleophile" evidence="4">
    <location>
        <position position="439"/>
    </location>
</feature>
<feature type="glycosylation site" description="N-linked (GlcNAc...) asparagine" evidence="3">
    <location>
        <position position="197"/>
    </location>
</feature>
<feature type="glycosylation site" description="N-linked (GlcNAc...) asparagine" evidence="3">
    <location>
        <position position="261"/>
    </location>
</feature>
<feature type="glycosylation site" description="N-linked (GlcNAc...) asparagine" evidence="3">
    <location>
        <position position="307"/>
    </location>
</feature>
<feature type="glycosylation site" description="N-linked (GlcNAc...) asparagine" evidence="3">
    <location>
        <position position="346"/>
    </location>
</feature>
<feature type="glycosylation site" description="N-linked (GlcNAc...) asparagine" evidence="3">
    <location>
        <position position="490"/>
    </location>
</feature>
<feature type="glycosylation site" description="N-linked (GlcNAc...) asparagine" evidence="3">
    <location>
        <position position="515"/>
    </location>
</feature>
<feature type="glycosylation site" description="N-linked (GlcNAc...) asparagine" evidence="3">
    <location>
        <position position="537"/>
    </location>
</feature>
<feature type="glycosylation site" description="N-linked (GlcNAc...) asparagine" evidence="3">
    <location>
        <position position="545"/>
    </location>
</feature>
<name>XYN5L_ARATH</name>
<keyword id="KW-0119">Carbohydrate metabolism</keyword>
<keyword id="KW-0325">Glycoprotein</keyword>
<keyword id="KW-0326">Glycosidase</keyword>
<keyword id="KW-0378">Hydrolase</keyword>
<keyword id="KW-0624">Polysaccharide degradation</keyword>
<keyword id="KW-1185">Reference proteome</keyword>
<keyword id="KW-0732">Signal</keyword>
<keyword id="KW-0858">Xylan degradation</keyword>
<dbReference type="EC" id="3.2.1.8" evidence="4"/>
<dbReference type="EMBL" id="AL031032">
    <property type="protein sequence ID" value="CAA19864.1"/>
    <property type="status" value="ALT_SEQ"/>
    <property type="molecule type" value="Genomic_DNA"/>
</dbReference>
<dbReference type="EMBL" id="AL161584">
    <property type="protein sequence ID" value="CAB80099.1"/>
    <property type="status" value="ALT_SEQ"/>
    <property type="molecule type" value="Genomic_DNA"/>
</dbReference>
<dbReference type="EMBL" id="CP002687">
    <property type="protein sequence ID" value="AEE86281.1"/>
    <property type="molecule type" value="Genomic_DNA"/>
</dbReference>
<dbReference type="EMBL" id="BT002790">
    <property type="protein sequence ID" value="AAO22618.1"/>
    <property type="molecule type" value="mRNA"/>
</dbReference>
<dbReference type="PIR" id="B85398">
    <property type="entry name" value="B85398"/>
</dbReference>
<dbReference type="PIR" id="T05210">
    <property type="entry name" value="T05210"/>
</dbReference>
<dbReference type="RefSeq" id="NP_680761.1">
    <property type="nucleotide sequence ID" value="NM_148395.2"/>
</dbReference>
<dbReference type="SMR" id="Q84WT5"/>
<dbReference type="FunCoup" id="Q84WT5">
    <property type="interactions" value="6"/>
</dbReference>
<dbReference type="STRING" id="3702.Q84WT5"/>
<dbReference type="CAZy" id="CBM22">
    <property type="family name" value="Carbohydrate-Binding Module Family 22"/>
</dbReference>
<dbReference type="CAZy" id="GH10">
    <property type="family name" value="Glycoside Hydrolase Family 10"/>
</dbReference>
<dbReference type="GlyGen" id="Q84WT5">
    <property type="glycosylation" value="9 sites"/>
</dbReference>
<dbReference type="PaxDb" id="3702-AT4G33820.1"/>
<dbReference type="ProteomicsDB" id="242456"/>
<dbReference type="EnsemblPlants" id="AT4G33820.1">
    <property type="protein sequence ID" value="AT4G33820.1"/>
    <property type="gene ID" value="AT4G33820"/>
</dbReference>
<dbReference type="GeneID" id="829524"/>
<dbReference type="Gramene" id="AT4G33820.1">
    <property type="protein sequence ID" value="AT4G33820.1"/>
    <property type="gene ID" value="AT4G33820"/>
</dbReference>
<dbReference type="KEGG" id="ath:AT4G33820"/>
<dbReference type="Araport" id="AT4G33820"/>
<dbReference type="TAIR" id="AT4G33820"/>
<dbReference type="eggNOG" id="ENOG502QSCW">
    <property type="taxonomic scope" value="Eukaryota"/>
</dbReference>
<dbReference type="HOGENOM" id="CLU_008797_4_0_1"/>
<dbReference type="InParanoid" id="Q84WT5"/>
<dbReference type="OMA" id="MQPSWVK"/>
<dbReference type="PhylomeDB" id="Q84WT5"/>
<dbReference type="BioCyc" id="ARA:AT4G33820-MONOMER"/>
<dbReference type="UniPathway" id="UPA00114"/>
<dbReference type="PRO" id="PR:Q84WT5"/>
<dbReference type="Proteomes" id="UP000006548">
    <property type="component" value="Chromosome 4"/>
</dbReference>
<dbReference type="ExpressionAtlas" id="Q84WT5">
    <property type="expression patterns" value="baseline and differential"/>
</dbReference>
<dbReference type="GO" id="GO:0031176">
    <property type="term" value="F:endo-1,4-beta-xylanase activity"/>
    <property type="evidence" value="ECO:0007669"/>
    <property type="project" value="UniProtKB-EC"/>
</dbReference>
<dbReference type="GO" id="GO:0045493">
    <property type="term" value="P:xylan catabolic process"/>
    <property type="evidence" value="ECO:0007669"/>
    <property type="project" value="UniProtKB-UniPathway"/>
</dbReference>
<dbReference type="Gene3D" id="2.60.120.260">
    <property type="entry name" value="Galactose-binding domain-like"/>
    <property type="match status" value="1"/>
</dbReference>
<dbReference type="Gene3D" id="3.20.20.80">
    <property type="entry name" value="Glycosidases"/>
    <property type="match status" value="1"/>
</dbReference>
<dbReference type="InterPro" id="IPR044846">
    <property type="entry name" value="GH10"/>
</dbReference>
<dbReference type="InterPro" id="IPR001000">
    <property type="entry name" value="GH10_dom"/>
</dbReference>
<dbReference type="InterPro" id="IPR017853">
    <property type="entry name" value="Glycoside_hydrolase_SF"/>
</dbReference>
<dbReference type="PANTHER" id="PTHR31490:SF52">
    <property type="entry name" value="ENDO-1,4-BETA-XYLANASE 5-RELATED"/>
    <property type="match status" value="1"/>
</dbReference>
<dbReference type="PANTHER" id="PTHR31490">
    <property type="entry name" value="GLYCOSYL HYDROLASE"/>
    <property type="match status" value="1"/>
</dbReference>
<dbReference type="Pfam" id="PF00331">
    <property type="entry name" value="Glyco_hydro_10"/>
    <property type="match status" value="1"/>
</dbReference>
<dbReference type="SMART" id="SM00633">
    <property type="entry name" value="Glyco_10"/>
    <property type="match status" value="1"/>
</dbReference>
<dbReference type="SUPFAM" id="SSF51445">
    <property type="entry name" value="(Trans)glycosidases"/>
    <property type="match status" value="1"/>
</dbReference>
<dbReference type="PROSITE" id="PS51760">
    <property type="entry name" value="GH10_2"/>
    <property type="match status" value="1"/>
</dbReference>
<proteinExistence type="evidence at transcript level"/>
<comment type="function">
    <text evidence="1">Binds to and hydrolyzes insoluble and soluble xylan substrates.</text>
</comment>
<comment type="catalytic activity">
    <reaction evidence="4">
        <text>Endohydrolysis of (1-&gt;4)-beta-D-xylosidic linkages in xylans.</text>
        <dbReference type="EC" id="3.2.1.8"/>
    </reaction>
</comment>
<comment type="pathway">
    <text evidence="4">Glycan degradation; xylan degradation.</text>
</comment>
<comment type="domain">
    <text evidence="1">The GH10 domain binds to xylan.</text>
</comment>
<comment type="similarity">
    <text evidence="4">Belongs to the glycosyl hydrolase 10 (cellulase F) family.</text>
</comment>
<comment type="sequence caution" evidence="5">
    <conflict type="erroneous gene model prediction">
        <sequence resource="EMBL-CDS" id="CAA19864"/>
    </conflict>
</comment>
<comment type="sequence caution" evidence="5">
    <conflict type="erroneous gene model prediction">
        <sequence resource="EMBL-CDS" id="CAB80099"/>
    </conflict>
</comment>
<accession>Q84WT5</accession>
<accession>O82111</accession>
<accession>Q9M070</accession>
<protein>
    <recommendedName>
        <fullName evidence="5">Endo-1,4-beta-xylanase 5-like</fullName>
        <shortName evidence="5">AtXyn5-like</shortName>
        <shortName evidence="5">Xylan endohydrolase 5-like</shortName>
        <shortName evidence="5">Xylanase 5-like</shortName>
        <ecNumber evidence="4">3.2.1.8</ecNumber>
    </recommendedName>
</protein>
<evidence type="ECO:0000250" key="1">
    <source>
        <dbReference type="UniProtKB" id="A3DH97"/>
    </source>
</evidence>
<evidence type="ECO:0000255" key="2"/>
<evidence type="ECO:0000255" key="3">
    <source>
        <dbReference type="PROSITE-ProRule" id="PRU00498"/>
    </source>
</evidence>
<evidence type="ECO:0000255" key="4">
    <source>
        <dbReference type="PROSITE-ProRule" id="PRU01096"/>
    </source>
</evidence>
<evidence type="ECO:0000305" key="5"/>
<evidence type="ECO:0000312" key="6">
    <source>
        <dbReference type="Araport" id="AT4G33820"/>
    </source>
</evidence>
<evidence type="ECO:0000312" key="7">
    <source>
        <dbReference type="EMBL" id="CAA19864.1"/>
    </source>
</evidence>
<organism>
    <name type="scientific">Arabidopsis thaliana</name>
    <name type="common">Mouse-ear cress</name>
    <dbReference type="NCBI Taxonomy" id="3702"/>
    <lineage>
        <taxon>Eukaryota</taxon>
        <taxon>Viridiplantae</taxon>
        <taxon>Streptophyta</taxon>
        <taxon>Embryophyta</taxon>
        <taxon>Tracheophyta</taxon>
        <taxon>Spermatophyta</taxon>
        <taxon>Magnoliopsida</taxon>
        <taxon>eudicotyledons</taxon>
        <taxon>Gunneridae</taxon>
        <taxon>Pentapetalae</taxon>
        <taxon>rosids</taxon>
        <taxon>malvids</taxon>
        <taxon>Brassicales</taxon>
        <taxon>Brassicaceae</taxon>
        <taxon>Camelineae</taxon>
        <taxon>Arabidopsis</taxon>
    </lineage>
</organism>